<keyword id="KW-0963">Cytoplasm</keyword>
<keyword id="KW-0378">Hydrolase</keyword>
<keyword id="KW-1185">Reference proteome</keyword>
<keyword id="KW-0694">RNA-binding</keyword>
<keyword id="KW-0820">tRNA-binding</keyword>
<protein>
    <recommendedName>
        <fullName evidence="1">Peptidyl-tRNA hydrolase</fullName>
        <shortName evidence="1">Pth</shortName>
        <ecNumber evidence="1">3.1.1.29</ecNumber>
    </recommendedName>
</protein>
<feature type="chain" id="PRO_0000264095" description="Peptidyl-tRNA hydrolase">
    <location>
        <begin position="1"/>
        <end position="243"/>
    </location>
</feature>
<feature type="region of interest" description="Disordered" evidence="2">
    <location>
        <begin position="184"/>
        <end position="225"/>
    </location>
</feature>
<feature type="compositionally biased region" description="Basic and acidic residues" evidence="2">
    <location>
        <begin position="189"/>
        <end position="206"/>
    </location>
</feature>
<feature type="active site" description="Proton acceptor" evidence="1">
    <location>
        <position position="19"/>
    </location>
</feature>
<feature type="binding site" evidence="1">
    <location>
        <position position="14"/>
    </location>
    <ligand>
        <name>tRNA</name>
        <dbReference type="ChEBI" id="CHEBI:17843"/>
    </ligand>
</feature>
<feature type="binding site" evidence="1">
    <location>
        <position position="64"/>
    </location>
    <ligand>
        <name>tRNA</name>
        <dbReference type="ChEBI" id="CHEBI:17843"/>
    </ligand>
</feature>
<feature type="binding site" evidence="1">
    <location>
        <position position="66"/>
    </location>
    <ligand>
        <name>tRNA</name>
        <dbReference type="ChEBI" id="CHEBI:17843"/>
    </ligand>
</feature>
<feature type="binding site" evidence="1">
    <location>
        <position position="112"/>
    </location>
    <ligand>
        <name>tRNA</name>
        <dbReference type="ChEBI" id="CHEBI:17843"/>
    </ligand>
</feature>
<feature type="site" description="Discriminates between blocked and unblocked aminoacyl-tRNA" evidence="1">
    <location>
        <position position="9"/>
    </location>
</feature>
<feature type="site" description="Stabilizes the basic form of H active site to accept a proton" evidence="1">
    <location>
        <position position="91"/>
    </location>
</feature>
<reference key="1">
    <citation type="journal article" date="2011" name="Stand. Genomic Sci.">
        <title>Complete genome sequence of Rhodospirillum rubrum type strain (S1).</title>
        <authorList>
            <person name="Munk A.C."/>
            <person name="Copeland A."/>
            <person name="Lucas S."/>
            <person name="Lapidus A."/>
            <person name="Del Rio T.G."/>
            <person name="Barry K."/>
            <person name="Detter J.C."/>
            <person name="Hammon N."/>
            <person name="Israni S."/>
            <person name="Pitluck S."/>
            <person name="Brettin T."/>
            <person name="Bruce D."/>
            <person name="Han C."/>
            <person name="Tapia R."/>
            <person name="Gilna P."/>
            <person name="Schmutz J."/>
            <person name="Larimer F."/>
            <person name="Land M."/>
            <person name="Kyrpides N.C."/>
            <person name="Mavromatis K."/>
            <person name="Richardson P."/>
            <person name="Rohde M."/>
            <person name="Goeker M."/>
            <person name="Klenk H.P."/>
            <person name="Zhang Y."/>
            <person name="Roberts G.P."/>
            <person name="Reslewic S."/>
            <person name="Schwartz D.C."/>
        </authorList>
    </citation>
    <scope>NUCLEOTIDE SEQUENCE [LARGE SCALE GENOMIC DNA]</scope>
    <source>
        <strain>ATCC 11170 / ATH 1.1.1 / DSM 467 / LMG 4362 / NCIMB 8255 / S1</strain>
    </source>
</reference>
<evidence type="ECO:0000255" key="1">
    <source>
        <dbReference type="HAMAP-Rule" id="MF_00083"/>
    </source>
</evidence>
<evidence type="ECO:0000256" key="2">
    <source>
        <dbReference type="SAM" id="MobiDB-lite"/>
    </source>
</evidence>
<organism>
    <name type="scientific">Rhodospirillum rubrum (strain ATCC 11170 / ATH 1.1.1 / DSM 467 / LMG 4362 / NCIMB 8255 / S1)</name>
    <dbReference type="NCBI Taxonomy" id="269796"/>
    <lineage>
        <taxon>Bacteria</taxon>
        <taxon>Pseudomonadati</taxon>
        <taxon>Pseudomonadota</taxon>
        <taxon>Alphaproteobacteria</taxon>
        <taxon>Rhodospirillales</taxon>
        <taxon>Rhodospirillaceae</taxon>
        <taxon>Rhodospirillum</taxon>
    </lineage>
</organism>
<sequence>MKLVVGLGNPGPRYAGNRHNVGFMAVAALARRHGIGPFRRKFQAQVADGQIAGARLLLLAPETFMNASGQAVGEAARFHKIAPEDIIVLHDELDLAPGKIKVKQGGGAGGHNGIRDIEAHLGPAFWRVRLGIGHPGHKDRVLTYVLGDFAKAEEDWLAPMLDAVADHFALMLEGRPADFMSKVAAQTRPAEKAKPLATAKPKEGEARTSGGSVAEVGAPPPSPTGLAAALAEALDRKSQKGNG</sequence>
<name>PTH_RHORT</name>
<comment type="function">
    <text evidence="1">Hydrolyzes ribosome-free peptidyl-tRNAs (with 1 or more amino acids incorporated), which drop off the ribosome during protein synthesis, or as a result of ribosome stalling.</text>
</comment>
<comment type="function">
    <text evidence="1">Catalyzes the release of premature peptidyl moieties from peptidyl-tRNA molecules trapped in stalled 50S ribosomal subunits, and thus maintains levels of free tRNAs and 50S ribosomes.</text>
</comment>
<comment type="catalytic activity">
    <reaction evidence="1">
        <text>an N-acyl-L-alpha-aminoacyl-tRNA + H2O = an N-acyl-L-amino acid + a tRNA + H(+)</text>
        <dbReference type="Rhea" id="RHEA:54448"/>
        <dbReference type="Rhea" id="RHEA-COMP:10123"/>
        <dbReference type="Rhea" id="RHEA-COMP:13883"/>
        <dbReference type="ChEBI" id="CHEBI:15377"/>
        <dbReference type="ChEBI" id="CHEBI:15378"/>
        <dbReference type="ChEBI" id="CHEBI:59874"/>
        <dbReference type="ChEBI" id="CHEBI:78442"/>
        <dbReference type="ChEBI" id="CHEBI:138191"/>
        <dbReference type="EC" id="3.1.1.29"/>
    </reaction>
</comment>
<comment type="subunit">
    <text evidence="1">Monomer.</text>
</comment>
<comment type="subcellular location">
    <subcellularLocation>
        <location evidence="1">Cytoplasm</location>
    </subcellularLocation>
</comment>
<comment type="similarity">
    <text evidence="1">Belongs to the PTH family.</text>
</comment>
<accession>Q2RMV4</accession>
<proteinExistence type="inferred from homology"/>
<dbReference type="EC" id="3.1.1.29" evidence="1"/>
<dbReference type="EMBL" id="CP000230">
    <property type="protein sequence ID" value="ABC24541.1"/>
    <property type="molecule type" value="Genomic_DNA"/>
</dbReference>
<dbReference type="RefSeq" id="WP_011391494.1">
    <property type="nucleotide sequence ID" value="NC_007643.1"/>
</dbReference>
<dbReference type="RefSeq" id="YP_428828.1">
    <property type="nucleotide sequence ID" value="NC_007643.1"/>
</dbReference>
<dbReference type="SMR" id="Q2RMV4"/>
<dbReference type="STRING" id="269796.Rru_A3747"/>
<dbReference type="EnsemblBacteria" id="ABC24541">
    <property type="protein sequence ID" value="ABC24541"/>
    <property type="gene ID" value="Rru_A3747"/>
</dbReference>
<dbReference type="KEGG" id="rru:Rru_A3747"/>
<dbReference type="PATRIC" id="fig|269796.9.peg.3871"/>
<dbReference type="eggNOG" id="COG0193">
    <property type="taxonomic scope" value="Bacteria"/>
</dbReference>
<dbReference type="HOGENOM" id="CLU_062456_1_1_5"/>
<dbReference type="PhylomeDB" id="Q2RMV4"/>
<dbReference type="Proteomes" id="UP000001929">
    <property type="component" value="Chromosome"/>
</dbReference>
<dbReference type="GO" id="GO:0005737">
    <property type="term" value="C:cytoplasm"/>
    <property type="evidence" value="ECO:0007669"/>
    <property type="project" value="UniProtKB-SubCell"/>
</dbReference>
<dbReference type="GO" id="GO:0004045">
    <property type="term" value="F:peptidyl-tRNA hydrolase activity"/>
    <property type="evidence" value="ECO:0007669"/>
    <property type="project" value="UniProtKB-UniRule"/>
</dbReference>
<dbReference type="GO" id="GO:0000049">
    <property type="term" value="F:tRNA binding"/>
    <property type="evidence" value="ECO:0007669"/>
    <property type="project" value="UniProtKB-UniRule"/>
</dbReference>
<dbReference type="GO" id="GO:0006515">
    <property type="term" value="P:protein quality control for misfolded or incompletely synthesized proteins"/>
    <property type="evidence" value="ECO:0007669"/>
    <property type="project" value="UniProtKB-UniRule"/>
</dbReference>
<dbReference type="GO" id="GO:0072344">
    <property type="term" value="P:rescue of stalled ribosome"/>
    <property type="evidence" value="ECO:0007669"/>
    <property type="project" value="UniProtKB-UniRule"/>
</dbReference>
<dbReference type="CDD" id="cd00462">
    <property type="entry name" value="PTH"/>
    <property type="match status" value="1"/>
</dbReference>
<dbReference type="FunFam" id="3.40.50.1470:FF:000001">
    <property type="entry name" value="Peptidyl-tRNA hydrolase"/>
    <property type="match status" value="1"/>
</dbReference>
<dbReference type="Gene3D" id="3.40.50.1470">
    <property type="entry name" value="Peptidyl-tRNA hydrolase"/>
    <property type="match status" value="1"/>
</dbReference>
<dbReference type="HAMAP" id="MF_00083">
    <property type="entry name" value="Pept_tRNA_hydro_bact"/>
    <property type="match status" value="1"/>
</dbReference>
<dbReference type="InterPro" id="IPR001328">
    <property type="entry name" value="Pept_tRNA_hydro"/>
</dbReference>
<dbReference type="InterPro" id="IPR018171">
    <property type="entry name" value="Pept_tRNA_hydro_CS"/>
</dbReference>
<dbReference type="InterPro" id="IPR036416">
    <property type="entry name" value="Pept_tRNA_hydro_sf"/>
</dbReference>
<dbReference type="NCBIfam" id="TIGR00447">
    <property type="entry name" value="pth"/>
    <property type="match status" value="1"/>
</dbReference>
<dbReference type="PANTHER" id="PTHR17224">
    <property type="entry name" value="PEPTIDYL-TRNA HYDROLASE"/>
    <property type="match status" value="1"/>
</dbReference>
<dbReference type="PANTHER" id="PTHR17224:SF1">
    <property type="entry name" value="PEPTIDYL-TRNA HYDROLASE"/>
    <property type="match status" value="1"/>
</dbReference>
<dbReference type="Pfam" id="PF01195">
    <property type="entry name" value="Pept_tRNA_hydro"/>
    <property type="match status" value="1"/>
</dbReference>
<dbReference type="SUPFAM" id="SSF53178">
    <property type="entry name" value="Peptidyl-tRNA hydrolase-like"/>
    <property type="match status" value="1"/>
</dbReference>
<dbReference type="PROSITE" id="PS01196">
    <property type="entry name" value="PEPT_TRNA_HYDROL_2"/>
    <property type="match status" value="1"/>
</dbReference>
<gene>
    <name evidence="1" type="primary">pth</name>
    <name type="ordered locus">Rru_A3747</name>
</gene>